<protein>
    <recommendedName>
        <fullName evidence="1">Large ribosomal subunit protein eL37</fullName>
    </recommendedName>
    <alternativeName>
        <fullName evidence="2">50S ribosomal protein L37e</fullName>
    </alternativeName>
</protein>
<gene>
    <name evidence="1" type="primary">rpl37e</name>
    <name type="ordered locus">YG5714_1379</name>
</gene>
<keyword id="KW-0479">Metal-binding</keyword>
<keyword id="KW-0687">Ribonucleoprotein</keyword>
<keyword id="KW-0689">Ribosomal protein</keyword>
<keyword id="KW-0694">RNA-binding</keyword>
<keyword id="KW-0699">rRNA-binding</keyword>
<keyword id="KW-0862">Zinc</keyword>
<keyword id="KW-0863">Zinc-finger</keyword>
<evidence type="ECO:0000255" key="1">
    <source>
        <dbReference type="HAMAP-Rule" id="MF_00547"/>
    </source>
</evidence>
<evidence type="ECO:0000305" key="2"/>
<reference key="1">
    <citation type="journal article" date="2009" name="Proc. Natl. Acad. Sci. U.S.A.">
        <title>Biogeography of the Sulfolobus islandicus pan-genome.</title>
        <authorList>
            <person name="Reno M.L."/>
            <person name="Held N.L."/>
            <person name="Fields C.J."/>
            <person name="Burke P.V."/>
            <person name="Whitaker R.J."/>
        </authorList>
    </citation>
    <scope>NUCLEOTIDE SEQUENCE [LARGE SCALE GENOMIC DNA]</scope>
    <source>
        <strain>Y.G.57.14 / Yellowstone #1</strain>
    </source>
</reference>
<name>RL37_SACI7</name>
<sequence length="61" mass="7117">MKGTPSFGKMNKSHTHIRCRRCGRNAYNVSKHYCAACGFGKTKKIRRYSWQNKKVNGVRIR</sequence>
<organism>
    <name type="scientific">Saccharolobus islandicus (strain Y.G.57.14 / Yellowstone #1)</name>
    <name type="common">Sulfolobus islandicus</name>
    <dbReference type="NCBI Taxonomy" id="439386"/>
    <lineage>
        <taxon>Archaea</taxon>
        <taxon>Thermoproteota</taxon>
        <taxon>Thermoprotei</taxon>
        <taxon>Sulfolobales</taxon>
        <taxon>Sulfolobaceae</taxon>
        <taxon>Saccharolobus</taxon>
    </lineage>
</organism>
<dbReference type="EMBL" id="CP001403">
    <property type="protein sequence ID" value="ACP45646.1"/>
    <property type="molecule type" value="Genomic_DNA"/>
</dbReference>
<dbReference type="RefSeq" id="WP_012711384.1">
    <property type="nucleotide sequence ID" value="NC_012622.1"/>
</dbReference>
<dbReference type="SMR" id="C3NEA7"/>
<dbReference type="KEGG" id="siy:YG5714_1379"/>
<dbReference type="HOGENOM" id="CLU_208825_0_0_2"/>
<dbReference type="Proteomes" id="UP000002308">
    <property type="component" value="Chromosome"/>
</dbReference>
<dbReference type="GO" id="GO:1990904">
    <property type="term" value="C:ribonucleoprotein complex"/>
    <property type="evidence" value="ECO:0007669"/>
    <property type="project" value="UniProtKB-KW"/>
</dbReference>
<dbReference type="GO" id="GO:0005840">
    <property type="term" value="C:ribosome"/>
    <property type="evidence" value="ECO:0007669"/>
    <property type="project" value="UniProtKB-KW"/>
</dbReference>
<dbReference type="GO" id="GO:0019843">
    <property type="term" value="F:rRNA binding"/>
    <property type="evidence" value="ECO:0007669"/>
    <property type="project" value="UniProtKB-KW"/>
</dbReference>
<dbReference type="GO" id="GO:0003735">
    <property type="term" value="F:structural constituent of ribosome"/>
    <property type="evidence" value="ECO:0007669"/>
    <property type="project" value="InterPro"/>
</dbReference>
<dbReference type="GO" id="GO:0008270">
    <property type="term" value="F:zinc ion binding"/>
    <property type="evidence" value="ECO:0007669"/>
    <property type="project" value="UniProtKB-UniRule"/>
</dbReference>
<dbReference type="GO" id="GO:0006412">
    <property type="term" value="P:translation"/>
    <property type="evidence" value="ECO:0007669"/>
    <property type="project" value="UniProtKB-UniRule"/>
</dbReference>
<dbReference type="FunFam" id="2.20.25.30:FF:000003">
    <property type="entry name" value="50S ribosomal protein L37e"/>
    <property type="match status" value="1"/>
</dbReference>
<dbReference type="Gene3D" id="2.20.25.30">
    <property type="match status" value="1"/>
</dbReference>
<dbReference type="HAMAP" id="MF_00547">
    <property type="entry name" value="Ribosomal_eL37"/>
    <property type="match status" value="1"/>
</dbReference>
<dbReference type="InterPro" id="IPR001569">
    <property type="entry name" value="Ribosomal_eL37"/>
</dbReference>
<dbReference type="InterPro" id="IPR011331">
    <property type="entry name" value="Ribosomal_eL37/eL43"/>
</dbReference>
<dbReference type="InterPro" id="IPR018267">
    <property type="entry name" value="Ribosomal_eL37_CS"/>
</dbReference>
<dbReference type="InterPro" id="IPR011332">
    <property type="entry name" value="Ribosomal_zn-bd"/>
</dbReference>
<dbReference type="NCBIfam" id="NF003214">
    <property type="entry name" value="PRK04179.1"/>
    <property type="match status" value="1"/>
</dbReference>
<dbReference type="Pfam" id="PF01907">
    <property type="entry name" value="Ribosomal_L37e"/>
    <property type="match status" value="1"/>
</dbReference>
<dbReference type="SUPFAM" id="SSF57829">
    <property type="entry name" value="Zn-binding ribosomal proteins"/>
    <property type="match status" value="1"/>
</dbReference>
<dbReference type="PROSITE" id="PS01077">
    <property type="entry name" value="RIBOSOMAL_L37E"/>
    <property type="match status" value="1"/>
</dbReference>
<feature type="chain" id="PRO_1000211974" description="Large ribosomal subunit protein eL37">
    <location>
        <begin position="1"/>
        <end position="61"/>
    </location>
</feature>
<feature type="zinc finger region" description="C4-type" evidence="1">
    <location>
        <begin position="19"/>
        <end position="37"/>
    </location>
</feature>
<feature type="binding site" evidence="1">
    <location>
        <position position="19"/>
    </location>
    <ligand>
        <name>Zn(2+)</name>
        <dbReference type="ChEBI" id="CHEBI:29105"/>
    </ligand>
</feature>
<feature type="binding site" evidence="1">
    <location>
        <position position="22"/>
    </location>
    <ligand>
        <name>Zn(2+)</name>
        <dbReference type="ChEBI" id="CHEBI:29105"/>
    </ligand>
</feature>
<feature type="binding site" evidence="1">
    <location>
        <position position="34"/>
    </location>
    <ligand>
        <name>Zn(2+)</name>
        <dbReference type="ChEBI" id="CHEBI:29105"/>
    </ligand>
</feature>
<feature type="binding site" evidence="1">
    <location>
        <position position="37"/>
    </location>
    <ligand>
        <name>Zn(2+)</name>
        <dbReference type="ChEBI" id="CHEBI:29105"/>
    </ligand>
</feature>
<proteinExistence type="inferred from homology"/>
<accession>C3NEA7</accession>
<comment type="function">
    <text evidence="1">Binds to the 23S rRNA.</text>
</comment>
<comment type="cofactor">
    <cofactor evidence="1">
        <name>Zn(2+)</name>
        <dbReference type="ChEBI" id="CHEBI:29105"/>
    </cofactor>
    <text evidence="1">Binds 1 zinc ion per subunit.</text>
</comment>
<comment type="similarity">
    <text evidence="1">Belongs to the eukaryotic ribosomal protein eL37 family.</text>
</comment>